<organism>
    <name type="scientific">Xanthomonas campestris pv. campestris (strain B100)</name>
    <dbReference type="NCBI Taxonomy" id="509169"/>
    <lineage>
        <taxon>Bacteria</taxon>
        <taxon>Pseudomonadati</taxon>
        <taxon>Pseudomonadota</taxon>
        <taxon>Gammaproteobacteria</taxon>
        <taxon>Lysobacterales</taxon>
        <taxon>Lysobacteraceae</taxon>
        <taxon>Xanthomonas</taxon>
    </lineage>
</organism>
<reference key="1">
    <citation type="journal article" date="2008" name="J. Biotechnol.">
        <title>The genome of Xanthomonas campestris pv. campestris B100 and its use for the reconstruction of metabolic pathways involved in xanthan biosynthesis.</title>
        <authorList>
            <person name="Vorhoelter F.-J."/>
            <person name="Schneiker S."/>
            <person name="Goesmann A."/>
            <person name="Krause L."/>
            <person name="Bekel T."/>
            <person name="Kaiser O."/>
            <person name="Linke B."/>
            <person name="Patschkowski T."/>
            <person name="Rueckert C."/>
            <person name="Schmid J."/>
            <person name="Sidhu V.K."/>
            <person name="Sieber V."/>
            <person name="Tauch A."/>
            <person name="Watt S.A."/>
            <person name="Weisshaar B."/>
            <person name="Becker A."/>
            <person name="Niehaus K."/>
            <person name="Puehler A."/>
        </authorList>
    </citation>
    <scope>NUCLEOTIDE SEQUENCE [LARGE SCALE GENOMIC DNA]</scope>
    <source>
        <strain>B100</strain>
    </source>
</reference>
<protein>
    <recommendedName>
        <fullName evidence="1">Uracil phosphoribosyltransferase</fullName>
        <ecNumber evidence="1">2.4.2.9</ecNumber>
    </recommendedName>
    <alternativeName>
        <fullName evidence="1">UMP pyrophosphorylase</fullName>
    </alternativeName>
    <alternativeName>
        <fullName evidence="1">UPRTase</fullName>
    </alternativeName>
</protein>
<comment type="function">
    <text evidence="1">Catalyzes the conversion of uracil and 5-phospho-alpha-D-ribose 1-diphosphate (PRPP) to UMP and diphosphate.</text>
</comment>
<comment type="catalytic activity">
    <reaction evidence="1">
        <text>UMP + diphosphate = 5-phospho-alpha-D-ribose 1-diphosphate + uracil</text>
        <dbReference type="Rhea" id="RHEA:13017"/>
        <dbReference type="ChEBI" id="CHEBI:17568"/>
        <dbReference type="ChEBI" id="CHEBI:33019"/>
        <dbReference type="ChEBI" id="CHEBI:57865"/>
        <dbReference type="ChEBI" id="CHEBI:58017"/>
        <dbReference type="EC" id="2.4.2.9"/>
    </reaction>
</comment>
<comment type="cofactor">
    <cofactor evidence="1">
        <name>Mg(2+)</name>
        <dbReference type="ChEBI" id="CHEBI:18420"/>
    </cofactor>
    <text evidence="1">Binds 1 Mg(2+) ion per subunit. The magnesium is bound as Mg-PRPP.</text>
</comment>
<comment type="activity regulation">
    <text evidence="1">Allosterically activated by GTP.</text>
</comment>
<comment type="pathway">
    <text evidence="1">Pyrimidine metabolism; UMP biosynthesis via salvage pathway; UMP from uracil: step 1/1.</text>
</comment>
<comment type="similarity">
    <text evidence="1">Belongs to the UPRTase family.</text>
</comment>
<evidence type="ECO:0000255" key="1">
    <source>
        <dbReference type="HAMAP-Rule" id="MF_01218"/>
    </source>
</evidence>
<gene>
    <name evidence="1" type="primary">upp</name>
    <name type="ordered locus">xcc-b100_1786</name>
</gene>
<name>UPP_XANCB</name>
<dbReference type="EC" id="2.4.2.9" evidence="1"/>
<dbReference type="EMBL" id="AM920689">
    <property type="protein sequence ID" value="CAP51138.1"/>
    <property type="molecule type" value="Genomic_DNA"/>
</dbReference>
<dbReference type="SMR" id="B0RRQ3"/>
<dbReference type="KEGG" id="xca:xcc-b100_1786"/>
<dbReference type="HOGENOM" id="CLU_067096_2_2_6"/>
<dbReference type="UniPathway" id="UPA00574">
    <property type="reaction ID" value="UER00636"/>
</dbReference>
<dbReference type="Proteomes" id="UP000001188">
    <property type="component" value="Chromosome"/>
</dbReference>
<dbReference type="GO" id="GO:0005525">
    <property type="term" value="F:GTP binding"/>
    <property type="evidence" value="ECO:0007669"/>
    <property type="project" value="UniProtKB-KW"/>
</dbReference>
<dbReference type="GO" id="GO:0000287">
    <property type="term" value="F:magnesium ion binding"/>
    <property type="evidence" value="ECO:0007669"/>
    <property type="project" value="UniProtKB-UniRule"/>
</dbReference>
<dbReference type="GO" id="GO:0004845">
    <property type="term" value="F:uracil phosphoribosyltransferase activity"/>
    <property type="evidence" value="ECO:0007669"/>
    <property type="project" value="UniProtKB-UniRule"/>
</dbReference>
<dbReference type="GO" id="GO:0044206">
    <property type="term" value="P:UMP salvage"/>
    <property type="evidence" value="ECO:0007669"/>
    <property type="project" value="UniProtKB-UniRule"/>
</dbReference>
<dbReference type="GO" id="GO:0006223">
    <property type="term" value="P:uracil salvage"/>
    <property type="evidence" value="ECO:0007669"/>
    <property type="project" value="InterPro"/>
</dbReference>
<dbReference type="CDD" id="cd06223">
    <property type="entry name" value="PRTases_typeI"/>
    <property type="match status" value="1"/>
</dbReference>
<dbReference type="FunFam" id="3.40.50.2020:FF:000003">
    <property type="entry name" value="Uracil phosphoribosyltransferase"/>
    <property type="match status" value="1"/>
</dbReference>
<dbReference type="Gene3D" id="3.40.50.2020">
    <property type="match status" value="1"/>
</dbReference>
<dbReference type="HAMAP" id="MF_01218_B">
    <property type="entry name" value="Upp_B"/>
    <property type="match status" value="1"/>
</dbReference>
<dbReference type="InterPro" id="IPR000836">
    <property type="entry name" value="PRibTrfase_dom"/>
</dbReference>
<dbReference type="InterPro" id="IPR029057">
    <property type="entry name" value="PRTase-like"/>
</dbReference>
<dbReference type="InterPro" id="IPR034332">
    <property type="entry name" value="Upp_B"/>
</dbReference>
<dbReference type="InterPro" id="IPR050054">
    <property type="entry name" value="UPRTase/APRTase"/>
</dbReference>
<dbReference type="InterPro" id="IPR005765">
    <property type="entry name" value="Ura_phspho_trans"/>
</dbReference>
<dbReference type="NCBIfam" id="NF001097">
    <property type="entry name" value="PRK00129.1"/>
    <property type="match status" value="1"/>
</dbReference>
<dbReference type="NCBIfam" id="TIGR01091">
    <property type="entry name" value="upp"/>
    <property type="match status" value="1"/>
</dbReference>
<dbReference type="PANTHER" id="PTHR32315">
    <property type="entry name" value="ADENINE PHOSPHORIBOSYLTRANSFERASE"/>
    <property type="match status" value="1"/>
</dbReference>
<dbReference type="PANTHER" id="PTHR32315:SF4">
    <property type="entry name" value="URACIL PHOSPHORIBOSYLTRANSFERASE, CHLOROPLASTIC"/>
    <property type="match status" value="1"/>
</dbReference>
<dbReference type="Pfam" id="PF14681">
    <property type="entry name" value="UPRTase"/>
    <property type="match status" value="1"/>
</dbReference>
<dbReference type="SUPFAM" id="SSF53271">
    <property type="entry name" value="PRTase-like"/>
    <property type="match status" value="1"/>
</dbReference>
<sequence>MKIVEVRHPLVQHKIGLLRDAALSTKGFRELVTELGTLLAYEATANLDTESHVQPGWAGPVEVQRIAGAKITLVPILRAGLGMLPGVLALIPAARVSVVGLQRDEETLQPVPYFERLTGRLEERDALILDPMLATGGTLIATIDMLKRAGARRIKGIFLVAAPEGLKALEAVHPDVEVYTAAIDDHLNEKGYILPGLGDAGDRIFGTRVE</sequence>
<proteinExistence type="inferred from homology"/>
<feature type="chain" id="PRO_1000139177" description="Uracil phosphoribosyltransferase">
    <location>
        <begin position="1"/>
        <end position="210"/>
    </location>
</feature>
<feature type="binding site" evidence="1">
    <location>
        <position position="78"/>
    </location>
    <ligand>
        <name>5-phospho-alpha-D-ribose 1-diphosphate</name>
        <dbReference type="ChEBI" id="CHEBI:58017"/>
    </ligand>
</feature>
<feature type="binding site" evidence="1">
    <location>
        <position position="103"/>
    </location>
    <ligand>
        <name>5-phospho-alpha-D-ribose 1-diphosphate</name>
        <dbReference type="ChEBI" id="CHEBI:58017"/>
    </ligand>
</feature>
<feature type="binding site" evidence="1">
    <location>
        <begin position="130"/>
        <end position="138"/>
    </location>
    <ligand>
        <name>5-phospho-alpha-D-ribose 1-diphosphate</name>
        <dbReference type="ChEBI" id="CHEBI:58017"/>
    </ligand>
</feature>
<feature type="binding site" evidence="1">
    <location>
        <position position="193"/>
    </location>
    <ligand>
        <name>uracil</name>
        <dbReference type="ChEBI" id="CHEBI:17568"/>
    </ligand>
</feature>
<feature type="binding site" evidence="1">
    <location>
        <begin position="198"/>
        <end position="200"/>
    </location>
    <ligand>
        <name>uracil</name>
        <dbReference type="ChEBI" id="CHEBI:17568"/>
    </ligand>
</feature>
<feature type="binding site" evidence="1">
    <location>
        <position position="199"/>
    </location>
    <ligand>
        <name>5-phospho-alpha-D-ribose 1-diphosphate</name>
        <dbReference type="ChEBI" id="CHEBI:58017"/>
    </ligand>
</feature>
<keyword id="KW-0021">Allosteric enzyme</keyword>
<keyword id="KW-0328">Glycosyltransferase</keyword>
<keyword id="KW-0342">GTP-binding</keyword>
<keyword id="KW-0460">Magnesium</keyword>
<keyword id="KW-0547">Nucleotide-binding</keyword>
<keyword id="KW-0808">Transferase</keyword>
<accession>B0RRQ3</accession>